<sequence>MYAVIETGGKQYKVQEGDVLFIEKLANEEGSTVTFDKVVAVSKDDKVSFGTPFVSNASVTAKVLCHGKGKKIIVFKYKPKKGYRRKQGHRQPYTKIQIEKINA</sequence>
<comment type="function">
    <text evidence="1">This protein binds to 23S rRNA in the presence of protein L20.</text>
</comment>
<comment type="subunit">
    <text evidence="1">Part of the 50S ribosomal subunit. Contacts protein L20.</text>
</comment>
<comment type="similarity">
    <text evidence="1">Belongs to the bacterial ribosomal protein bL21 family.</text>
</comment>
<organism>
    <name type="scientific">Acetivibrio thermocellus (strain ATCC 27405 / DSM 1237 / JCM 9322 / NBRC 103400 / NCIMB 10682 / NRRL B-4536 / VPI 7372)</name>
    <name type="common">Clostridium thermocellum</name>
    <dbReference type="NCBI Taxonomy" id="203119"/>
    <lineage>
        <taxon>Bacteria</taxon>
        <taxon>Bacillati</taxon>
        <taxon>Bacillota</taxon>
        <taxon>Clostridia</taxon>
        <taxon>Eubacteriales</taxon>
        <taxon>Oscillospiraceae</taxon>
        <taxon>Acetivibrio</taxon>
    </lineage>
</organism>
<evidence type="ECO:0000255" key="1">
    <source>
        <dbReference type="HAMAP-Rule" id="MF_01363"/>
    </source>
</evidence>
<evidence type="ECO:0000305" key="2"/>
<reference key="1">
    <citation type="submission" date="2007-02" db="EMBL/GenBank/DDBJ databases">
        <title>Complete sequence of Clostridium thermocellum ATCC 27405.</title>
        <authorList>
            <consortium name="US DOE Joint Genome Institute"/>
            <person name="Copeland A."/>
            <person name="Lucas S."/>
            <person name="Lapidus A."/>
            <person name="Barry K."/>
            <person name="Detter J.C."/>
            <person name="Glavina del Rio T."/>
            <person name="Hammon N."/>
            <person name="Israni S."/>
            <person name="Dalin E."/>
            <person name="Tice H."/>
            <person name="Pitluck S."/>
            <person name="Chertkov O."/>
            <person name="Brettin T."/>
            <person name="Bruce D."/>
            <person name="Han C."/>
            <person name="Tapia R."/>
            <person name="Gilna P."/>
            <person name="Schmutz J."/>
            <person name="Larimer F."/>
            <person name="Land M."/>
            <person name="Hauser L."/>
            <person name="Kyrpides N."/>
            <person name="Mikhailova N."/>
            <person name="Wu J.H.D."/>
            <person name="Newcomb M."/>
            <person name="Richardson P."/>
        </authorList>
    </citation>
    <scope>NUCLEOTIDE SEQUENCE [LARGE SCALE GENOMIC DNA]</scope>
    <source>
        <strain>ATCC 27405 / DSM 1237 / JCM 9322 / NBRC 103400 / NCIMB 10682 / NRRL B-4536 / VPI 7372</strain>
    </source>
</reference>
<gene>
    <name evidence="1" type="primary">rplU</name>
    <name type="ordered locus">Cthe_0160</name>
</gene>
<keyword id="KW-1185">Reference proteome</keyword>
<keyword id="KW-0687">Ribonucleoprotein</keyword>
<keyword id="KW-0689">Ribosomal protein</keyword>
<keyword id="KW-0694">RNA-binding</keyword>
<keyword id="KW-0699">rRNA-binding</keyword>
<accession>A3DBS2</accession>
<feature type="chain" id="PRO_1000067827" description="Large ribosomal subunit protein bL21">
    <location>
        <begin position="1"/>
        <end position="103"/>
    </location>
</feature>
<proteinExistence type="inferred from homology"/>
<name>RL21_ACET2</name>
<protein>
    <recommendedName>
        <fullName evidence="1">Large ribosomal subunit protein bL21</fullName>
    </recommendedName>
    <alternativeName>
        <fullName evidence="2">50S ribosomal protein L21</fullName>
    </alternativeName>
</protein>
<dbReference type="EMBL" id="CP000568">
    <property type="protein sequence ID" value="ABN51401.1"/>
    <property type="molecule type" value="Genomic_DNA"/>
</dbReference>
<dbReference type="RefSeq" id="WP_003512200.1">
    <property type="nucleotide sequence ID" value="NC_009012.1"/>
</dbReference>
<dbReference type="SMR" id="A3DBS2"/>
<dbReference type="STRING" id="203119.Cthe_0160"/>
<dbReference type="GeneID" id="35805106"/>
<dbReference type="KEGG" id="cth:Cthe_0160"/>
<dbReference type="eggNOG" id="COG0261">
    <property type="taxonomic scope" value="Bacteria"/>
</dbReference>
<dbReference type="HOGENOM" id="CLU_061463_3_2_9"/>
<dbReference type="OrthoDB" id="9813334at2"/>
<dbReference type="Proteomes" id="UP000002145">
    <property type="component" value="Chromosome"/>
</dbReference>
<dbReference type="GO" id="GO:0005737">
    <property type="term" value="C:cytoplasm"/>
    <property type="evidence" value="ECO:0007669"/>
    <property type="project" value="UniProtKB-ARBA"/>
</dbReference>
<dbReference type="GO" id="GO:1990904">
    <property type="term" value="C:ribonucleoprotein complex"/>
    <property type="evidence" value="ECO:0007669"/>
    <property type="project" value="UniProtKB-KW"/>
</dbReference>
<dbReference type="GO" id="GO:0005840">
    <property type="term" value="C:ribosome"/>
    <property type="evidence" value="ECO:0007669"/>
    <property type="project" value="UniProtKB-KW"/>
</dbReference>
<dbReference type="GO" id="GO:0019843">
    <property type="term" value="F:rRNA binding"/>
    <property type="evidence" value="ECO:0007669"/>
    <property type="project" value="UniProtKB-UniRule"/>
</dbReference>
<dbReference type="GO" id="GO:0003735">
    <property type="term" value="F:structural constituent of ribosome"/>
    <property type="evidence" value="ECO:0007669"/>
    <property type="project" value="InterPro"/>
</dbReference>
<dbReference type="GO" id="GO:0006412">
    <property type="term" value="P:translation"/>
    <property type="evidence" value="ECO:0007669"/>
    <property type="project" value="UniProtKB-UniRule"/>
</dbReference>
<dbReference type="HAMAP" id="MF_01363">
    <property type="entry name" value="Ribosomal_bL21"/>
    <property type="match status" value="1"/>
</dbReference>
<dbReference type="InterPro" id="IPR028909">
    <property type="entry name" value="bL21-like"/>
</dbReference>
<dbReference type="InterPro" id="IPR036164">
    <property type="entry name" value="bL21-like_sf"/>
</dbReference>
<dbReference type="InterPro" id="IPR001787">
    <property type="entry name" value="Ribosomal_bL21"/>
</dbReference>
<dbReference type="InterPro" id="IPR018258">
    <property type="entry name" value="Ribosomal_bL21_CS"/>
</dbReference>
<dbReference type="NCBIfam" id="TIGR00061">
    <property type="entry name" value="L21"/>
    <property type="match status" value="1"/>
</dbReference>
<dbReference type="PANTHER" id="PTHR21349">
    <property type="entry name" value="50S RIBOSOMAL PROTEIN L21"/>
    <property type="match status" value="1"/>
</dbReference>
<dbReference type="PANTHER" id="PTHR21349:SF0">
    <property type="entry name" value="LARGE RIBOSOMAL SUBUNIT PROTEIN BL21M"/>
    <property type="match status" value="1"/>
</dbReference>
<dbReference type="Pfam" id="PF00829">
    <property type="entry name" value="Ribosomal_L21p"/>
    <property type="match status" value="1"/>
</dbReference>
<dbReference type="SUPFAM" id="SSF141091">
    <property type="entry name" value="L21p-like"/>
    <property type="match status" value="1"/>
</dbReference>
<dbReference type="PROSITE" id="PS01169">
    <property type="entry name" value="RIBOSOMAL_L21"/>
    <property type="match status" value="1"/>
</dbReference>